<feature type="chain" id="PRO_0000386104" description="GTPase Obg">
    <location>
        <begin position="1"/>
        <end position="346"/>
    </location>
</feature>
<feature type="domain" description="Obg" evidence="2">
    <location>
        <begin position="1"/>
        <end position="158"/>
    </location>
</feature>
<feature type="domain" description="OBG-type G" evidence="1">
    <location>
        <begin position="159"/>
        <end position="332"/>
    </location>
</feature>
<feature type="binding site" evidence="1">
    <location>
        <begin position="165"/>
        <end position="172"/>
    </location>
    <ligand>
        <name>GTP</name>
        <dbReference type="ChEBI" id="CHEBI:37565"/>
    </ligand>
</feature>
<feature type="binding site" evidence="1">
    <location>
        <position position="172"/>
    </location>
    <ligand>
        <name>Mg(2+)</name>
        <dbReference type="ChEBI" id="CHEBI:18420"/>
    </ligand>
</feature>
<feature type="binding site" evidence="1">
    <location>
        <begin position="190"/>
        <end position="194"/>
    </location>
    <ligand>
        <name>GTP</name>
        <dbReference type="ChEBI" id="CHEBI:37565"/>
    </ligand>
</feature>
<feature type="binding site" evidence="1">
    <location>
        <position position="192"/>
    </location>
    <ligand>
        <name>Mg(2+)</name>
        <dbReference type="ChEBI" id="CHEBI:18420"/>
    </ligand>
</feature>
<feature type="binding site" evidence="1">
    <location>
        <begin position="216"/>
        <end position="219"/>
    </location>
    <ligand>
        <name>GTP</name>
        <dbReference type="ChEBI" id="CHEBI:37565"/>
    </ligand>
</feature>
<feature type="binding site" evidence="1">
    <location>
        <begin position="286"/>
        <end position="289"/>
    </location>
    <ligand>
        <name>GTP</name>
        <dbReference type="ChEBI" id="CHEBI:37565"/>
    </ligand>
</feature>
<feature type="binding site" evidence="1">
    <location>
        <begin position="313"/>
        <end position="315"/>
    </location>
    <ligand>
        <name>GTP</name>
        <dbReference type="ChEBI" id="CHEBI:37565"/>
    </ligand>
</feature>
<reference key="1">
    <citation type="journal article" date="2011" name="J. Bacteriol.">
        <title>Genome sequence of the verrucomicrobium Opitutus terrae PB90-1, an abundant inhabitant of rice paddy soil ecosystems.</title>
        <authorList>
            <person name="van Passel M.W."/>
            <person name="Kant R."/>
            <person name="Palva A."/>
            <person name="Copeland A."/>
            <person name="Lucas S."/>
            <person name="Lapidus A."/>
            <person name="Glavina del Rio T."/>
            <person name="Pitluck S."/>
            <person name="Goltsman E."/>
            <person name="Clum A."/>
            <person name="Sun H."/>
            <person name="Schmutz J."/>
            <person name="Larimer F.W."/>
            <person name="Land M.L."/>
            <person name="Hauser L."/>
            <person name="Kyrpides N."/>
            <person name="Mikhailova N."/>
            <person name="Richardson P.P."/>
            <person name="Janssen P.H."/>
            <person name="de Vos W.M."/>
            <person name="Smidt H."/>
        </authorList>
    </citation>
    <scope>NUCLEOTIDE SEQUENCE [LARGE SCALE GENOMIC DNA]</scope>
    <source>
        <strain>DSM 11246 / JCM 15787 / PB90-1</strain>
    </source>
</reference>
<organism>
    <name type="scientific">Opitutus terrae (strain DSM 11246 / JCM 15787 / PB90-1)</name>
    <dbReference type="NCBI Taxonomy" id="452637"/>
    <lineage>
        <taxon>Bacteria</taxon>
        <taxon>Pseudomonadati</taxon>
        <taxon>Verrucomicrobiota</taxon>
        <taxon>Opitutia</taxon>
        <taxon>Opitutales</taxon>
        <taxon>Opitutaceae</taxon>
        <taxon>Opitutus</taxon>
    </lineage>
</organism>
<evidence type="ECO:0000255" key="1">
    <source>
        <dbReference type="HAMAP-Rule" id="MF_01454"/>
    </source>
</evidence>
<evidence type="ECO:0000255" key="2">
    <source>
        <dbReference type="PROSITE-ProRule" id="PRU01231"/>
    </source>
</evidence>
<accession>B1ZZ37</accession>
<keyword id="KW-0963">Cytoplasm</keyword>
<keyword id="KW-0342">GTP-binding</keyword>
<keyword id="KW-0378">Hydrolase</keyword>
<keyword id="KW-0460">Magnesium</keyword>
<keyword id="KW-0479">Metal-binding</keyword>
<keyword id="KW-0547">Nucleotide-binding</keyword>
<keyword id="KW-1185">Reference proteome</keyword>
<protein>
    <recommendedName>
        <fullName evidence="1">GTPase Obg</fullName>
        <ecNumber evidence="1">3.6.5.-</ecNumber>
    </recommendedName>
    <alternativeName>
        <fullName evidence="1">GTP-binding protein Obg</fullName>
    </alternativeName>
</protein>
<name>OBG_OPITP</name>
<gene>
    <name evidence="1" type="primary">obg</name>
    <name type="ordered locus">Oter_3835</name>
</gene>
<dbReference type="EC" id="3.6.5.-" evidence="1"/>
<dbReference type="EMBL" id="CP001032">
    <property type="protein sequence ID" value="ACB77109.1"/>
    <property type="molecule type" value="Genomic_DNA"/>
</dbReference>
<dbReference type="RefSeq" id="WP_012376638.1">
    <property type="nucleotide sequence ID" value="NC_010571.1"/>
</dbReference>
<dbReference type="SMR" id="B1ZZ37"/>
<dbReference type="STRING" id="452637.Oter_3835"/>
<dbReference type="KEGG" id="ote:Oter_3835"/>
<dbReference type="eggNOG" id="COG0536">
    <property type="taxonomic scope" value="Bacteria"/>
</dbReference>
<dbReference type="HOGENOM" id="CLU_011747_2_3_0"/>
<dbReference type="OrthoDB" id="9807318at2"/>
<dbReference type="Proteomes" id="UP000007013">
    <property type="component" value="Chromosome"/>
</dbReference>
<dbReference type="GO" id="GO:0005737">
    <property type="term" value="C:cytoplasm"/>
    <property type="evidence" value="ECO:0007669"/>
    <property type="project" value="UniProtKB-SubCell"/>
</dbReference>
<dbReference type="GO" id="GO:0005525">
    <property type="term" value="F:GTP binding"/>
    <property type="evidence" value="ECO:0007669"/>
    <property type="project" value="UniProtKB-UniRule"/>
</dbReference>
<dbReference type="GO" id="GO:0003924">
    <property type="term" value="F:GTPase activity"/>
    <property type="evidence" value="ECO:0007669"/>
    <property type="project" value="UniProtKB-UniRule"/>
</dbReference>
<dbReference type="GO" id="GO:0000287">
    <property type="term" value="F:magnesium ion binding"/>
    <property type="evidence" value="ECO:0007669"/>
    <property type="project" value="InterPro"/>
</dbReference>
<dbReference type="GO" id="GO:0042254">
    <property type="term" value="P:ribosome biogenesis"/>
    <property type="evidence" value="ECO:0007669"/>
    <property type="project" value="UniProtKB-UniRule"/>
</dbReference>
<dbReference type="CDD" id="cd01898">
    <property type="entry name" value="Obg"/>
    <property type="match status" value="1"/>
</dbReference>
<dbReference type="FunFam" id="2.70.210.12:FF:000001">
    <property type="entry name" value="GTPase Obg"/>
    <property type="match status" value="1"/>
</dbReference>
<dbReference type="Gene3D" id="2.70.210.12">
    <property type="entry name" value="GTP1/OBG domain"/>
    <property type="match status" value="1"/>
</dbReference>
<dbReference type="Gene3D" id="3.40.50.300">
    <property type="entry name" value="P-loop containing nucleotide triphosphate hydrolases"/>
    <property type="match status" value="1"/>
</dbReference>
<dbReference type="HAMAP" id="MF_01454">
    <property type="entry name" value="GTPase_Obg"/>
    <property type="match status" value="1"/>
</dbReference>
<dbReference type="InterPro" id="IPR031167">
    <property type="entry name" value="G_OBG"/>
</dbReference>
<dbReference type="InterPro" id="IPR006073">
    <property type="entry name" value="GTP-bd"/>
</dbReference>
<dbReference type="InterPro" id="IPR014100">
    <property type="entry name" value="GTP-bd_Obg/CgtA"/>
</dbReference>
<dbReference type="InterPro" id="IPR006169">
    <property type="entry name" value="GTP1_OBG_dom"/>
</dbReference>
<dbReference type="InterPro" id="IPR036726">
    <property type="entry name" value="GTP1_OBG_dom_sf"/>
</dbReference>
<dbReference type="InterPro" id="IPR045086">
    <property type="entry name" value="OBG_GTPase"/>
</dbReference>
<dbReference type="InterPro" id="IPR027417">
    <property type="entry name" value="P-loop_NTPase"/>
</dbReference>
<dbReference type="NCBIfam" id="TIGR02729">
    <property type="entry name" value="Obg_CgtA"/>
    <property type="match status" value="1"/>
</dbReference>
<dbReference type="NCBIfam" id="NF008955">
    <property type="entry name" value="PRK12297.1"/>
    <property type="match status" value="1"/>
</dbReference>
<dbReference type="NCBIfam" id="NF008956">
    <property type="entry name" value="PRK12299.1"/>
    <property type="match status" value="1"/>
</dbReference>
<dbReference type="PANTHER" id="PTHR11702">
    <property type="entry name" value="DEVELOPMENTALLY REGULATED GTP-BINDING PROTEIN-RELATED"/>
    <property type="match status" value="1"/>
</dbReference>
<dbReference type="PANTHER" id="PTHR11702:SF31">
    <property type="entry name" value="MITOCHONDRIAL RIBOSOME-ASSOCIATED GTPASE 2"/>
    <property type="match status" value="1"/>
</dbReference>
<dbReference type="Pfam" id="PF01018">
    <property type="entry name" value="GTP1_OBG"/>
    <property type="match status" value="1"/>
</dbReference>
<dbReference type="Pfam" id="PF01926">
    <property type="entry name" value="MMR_HSR1"/>
    <property type="match status" value="1"/>
</dbReference>
<dbReference type="PIRSF" id="PIRSF002401">
    <property type="entry name" value="GTP_bd_Obg/CgtA"/>
    <property type="match status" value="1"/>
</dbReference>
<dbReference type="PRINTS" id="PR00326">
    <property type="entry name" value="GTP1OBG"/>
</dbReference>
<dbReference type="SUPFAM" id="SSF82051">
    <property type="entry name" value="Obg GTP-binding protein N-terminal domain"/>
    <property type="match status" value="1"/>
</dbReference>
<dbReference type="SUPFAM" id="SSF52540">
    <property type="entry name" value="P-loop containing nucleoside triphosphate hydrolases"/>
    <property type="match status" value="1"/>
</dbReference>
<dbReference type="PROSITE" id="PS51710">
    <property type="entry name" value="G_OBG"/>
    <property type="match status" value="1"/>
</dbReference>
<dbReference type="PROSITE" id="PS51883">
    <property type="entry name" value="OBG"/>
    <property type="match status" value="1"/>
</dbReference>
<proteinExistence type="inferred from homology"/>
<comment type="function">
    <text evidence="1">An essential GTPase which binds GTP, GDP and possibly (p)ppGpp with moderate affinity, with high nucleotide exchange rates and a fairly low GTP hydrolysis rate. Plays a role in control of the cell cycle, stress response, ribosome biogenesis and in those bacteria that undergo differentiation, in morphogenesis control.</text>
</comment>
<comment type="cofactor">
    <cofactor evidence="1">
        <name>Mg(2+)</name>
        <dbReference type="ChEBI" id="CHEBI:18420"/>
    </cofactor>
</comment>
<comment type="subunit">
    <text evidence="1">Monomer.</text>
</comment>
<comment type="subcellular location">
    <subcellularLocation>
        <location evidence="1">Cytoplasm</location>
    </subcellularLocation>
</comment>
<comment type="similarity">
    <text evidence="1">Belongs to the TRAFAC class OBG-HflX-like GTPase superfamily. OBG GTPase family.</text>
</comment>
<sequence length="346" mass="38072">MFVDECVVKLQAGDGGRGCISFRREKYEPWGGPNGGDGGRGGDVILLGDDDTNNLVDYKYQPHWNAERGEHGLGKDQHGKDGAHRVLKMPLGTVVIDEATGKPVAEVVEDGQQIVLCKGGNGGWGNTHFKTATTRAPKRANDGHPGERGTYRLVLKSIADVGLVGFPNAGKSSLTCLITRARPRTAAYPFTTLHPQIGIIDYPPDRHGRRRLRLADVPGLIEGASENRGLGHRFLRHIERCALLLVLIDMAGTDGRDPREDYKHLLRELELYDPALLKKPRLVAANKMDVEAAAANLSKFKRRHRTVDVLPLSCLTSEGIELLKKELLKRVTALRGREKVSPRARD</sequence>